<keyword id="KW-0521">NADP</keyword>
<keyword id="KW-0554">One-carbon metabolism</keyword>
<keyword id="KW-0560">Oxidoreductase</keyword>
<keyword id="KW-1185">Reference proteome</keyword>
<organism>
    <name type="scientific">Buchnera aphidicola subsp. Acyrthosiphon pisum (strain APS)</name>
    <name type="common">Acyrthosiphon pisum symbiotic bacterium</name>
    <dbReference type="NCBI Taxonomy" id="107806"/>
    <lineage>
        <taxon>Bacteria</taxon>
        <taxon>Pseudomonadati</taxon>
        <taxon>Pseudomonadota</taxon>
        <taxon>Gammaproteobacteria</taxon>
        <taxon>Enterobacterales</taxon>
        <taxon>Erwiniaceae</taxon>
        <taxon>Buchnera</taxon>
    </lineage>
</organism>
<evidence type="ECO:0000250" key="1"/>
<evidence type="ECO:0000255" key="2">
    <source>
        <dbReference type="PROSITE-ProRule" id="PRU00660"/>
    </source>
</evidence>
<evidence type="ECO:0000305" key="3"/>
<reference key="1">
    <citation type="journal article" date="2000" name="Nature">
        <title>Genome sequence of the endocellular bacterial symbiont of aphids Buchnera sp. APS.</title>
        <authorList>
            <person name="Shigenobu S."/>
            <person name="Watanabe H."/>
            <person name="Hattori M."/>
            <person name="Sakaki Y."/>
            <person name="Ishikawa H."/>
        </authorList>
    </citation>
    <scope>NUCLEOTIDE SEQUENCE [LARGE SCALE GENOMIC DNA]</scope>
    <source>
        <strain>APS</strain>
    </source>
</reference>
<accession>P57243</accession>
<sequence length="161" mass="19053">MNISLIAAISKNLVIGYKNKIPWYLPEDLKWFKQKTINKNIIMGRLTWESIKKKPLPMRKNIVISSNEIKQEGIIWADSISNAIISAQYNQEIMIIGGAKIYKEMLFYANKLYLTHIDIDIVGDAYFPEYKLYPYWKTLFRKKNTKNKMNPYNYSFEILSR</sequence>
<protein>
    <recommendedName>
        <fullName>Dihydrofolate reductase</fullName>
        <ecNumber>1.5.1.3</ecNumber>
    </recommendedName>
</protein>
<comment type="function">
    <text evidence="1">Key enzyme in folate metabolism. Catalyzes an essential reaction for de novo glycine and purine synthesis, and for DNA precursor synthesis (By similarity).</text>
</comment>
<comment type="catalytic activity">
    <reaction evidence="2">
        <text>(6S)-5,6,7,8-tetrahydrofolate + NADP(+) = 7,8-dihydrofolate + NADPH + H(+)</text>
        <dbReference type="Rhea" id="RHEA:15009"/>
        <dbReference type="ChEBI" id="CHEBI:15378"/>
        <dbReference type="ChEBI" id="CHEBI:57451"/>
        <dbReference type="ChEBI" id="CHEBI:57453"/>
        <dbReference type="ChEBI" id="CHEBI:57783"/>
        <dbReference type="ChEBI" id="CHEBI:58349"/>
        <dbReference type="EC" id="1.5.1.3"/>
    </reaction>
</comment>
<comment type="pathway">
    <text>Cofactor biosynthesis; tetrahydrofolate biosynthesis; 5,6,7,8-tetrahydrofolate from 7,8-dihydrofolate: step 1/1.</text>
</comment>
<comment type="similarity">
    <text evidence="3">Belongs to the dihydrofolate reductase family.</text>
</comment>
<gene>
    <name type="primary">folA</name>
    <name type="ordered locus">BU143</name>
</gene>
<name>DYR_BUCAI</name>
<feature type="chain" id="PRO_0000186383" description="Dihydrofolate reductase">
    <location>
        <begin position="1"/>
        <end position="161"/>
    </location>
</feature>
<feature type="domain" description="DHFR" evidence="2">
    <location>
        <begin position="2"/>
        <end position="161"/>
    </location>
</feature>
<feature type="binding site" evidence="1">
    <location>
        <begin position="6"/>
        <end position="8"/>
    </location>
    <ligand>
        <name>substrate</name>
    </ligand>
</feature>
<feature type="binding site" evidence="1">
    <location>
        <begin position="7"/>
        <end position="8"/>
    </location>
    <ligand>
        <name>NADP(+)</name>
        <dbReference type="ChEBI" id="CHEBI:58349"/>
    </ligand>
</feature>
<feature type="binding site" evidence="1">
    <location>
        <begin position="15"/>
        <end position="20"/>
    </location>
    <ligand>
        <name>NADP(+)</name>
        <dbReference type="ChEBI" id="CHEBI:58349"/>
    </ligand>
</feature>
<feature type="binding site" evidence="1">
    <location>
        <position position="28"/>
    </location>
    <ligand>
        <name>substrate</name>
    </ligand>
</feature>
<feature type="binding site" evidence="1">
    <location>
        <begin position="44"/>
        <end position="47"/>
    </location>
    <ligand>
        <name>NADP(+)</name>
        <dbReference type="ChEBI" id="CHEBI:58349"/>
    </ligand>
</feature>
<feature type="binding site" evidence="1">
    <location>
        <position position="59"/>
    </location>
    <ligand>
        <name>substrate</name>
    </ligand>
</feature>
<feature type="binding site" evidence="1">
    <location>
        <begin position="64"/>
        <end position="66"/>
    </location>
    <ligand>
        <name>NADP(+)</name>
        <dbReference type="ChEBI" id="CHEBI:58349"/>
    </ligand>
</feature>
<feature type="binding site" evidence="1">
    <location>
        <begin position="96"/>
        <end position="101"/>
    </location>
    <ligand>
        <name>NADP(+)</name>
        <dbReference type="ChEBI" id="CHEBI:58349"/>
    </ligand>
</feature>
<feature type="binding site" evidence="1">
    <location>
        <position position="115"/>
    </location>
    <ligand>
        <name>substrate</name>
    </ligand>
</feature>
<proteinExistence type="inferred from homology"/>
<dbReference type="EC" id="1.5.1.3"/>
<dbReference type="EMBL" id="BA000003">
    <property type="protein sequence ID" value="BAB12861.1"/>
    <property type="molecule type" value="Genomic_DNA"/>
</dbReference>
<dbReference type="RefSeq" id="NP_239975.1">
    <property type="nucleotide sequence ID" value="NC_002528.1"/>
</dbReference>
<dbReference type="RefSeq" id="WP_009874099.1">
    <property type="nucleotide sequence ID" value="NZ_AP036055.1"/>
</dbReference>
<dbReference type="SMR" id="P57243"/>
<dbReference type="STRING" id="563178.BUAP5A_141"/>
<dbReference type="EnsemblBacteria" id="BAB12861">
    <property type="protein sequence ID" value="BAB12861"/>
    <property type="gene ID" value="BAB12861"/>
</dbReference>
<dbReference type="KEGG" id="buc:BU143"/>
<dbReference type="PATRIC" id="fig|107806.10.peg.152"/>
<dbReference type="eggNOG" id="COG0262">
    <property type="taxonomic scope" value="Bacteria"/>
</dbReference>
<dbReference type="HOGENOM" id="CLU_043966_5_1_6"/>
<dbReference type="UniPathway" id="UPA00077">
    <property type="reaction ID" value="UER00158"/>
</dbReference>
<dbReference type="Proteomes" id="UP000001806">
    <property type="component" value="Chromosome"/>
</dbReference>
<dbReference type="GO" id="GO:0005829">
    <property type="term" value="C:cytosol"/>
    <property type="evidence" value="ECO:0007669"/>
    <property type="project" value="TreeGrafter"/>
</dbReference>
<dbReference type="GO" id="GO:0004146">
    <property type="term" value="F:dihydrofolate reductase activity"/>
    <property type="evidence" value="ECO:0007669"/>
    <property type="project" value="UniProtKB-EC"/>
</dbReference>
<dbReference type="GO" id="GO:0050661">
    <property type="term" value="F:NADP binding"/>
    <property type="evidence" value="ECO:0007669"/>
    <property type="project" value="InterPro"/>
</dbReference>
<dbReference type="GO" id="GO:0046452">
    <property type="term" value="P:dihydrofolate metabolic process"/>
    <property type="evidence" value="ECO:0007669"/>
    <property type="project" value="TreeGrafter"/>
</dbReference>
<dbReference type="GO" id="GO:0046655">
    <property type="term" value="P:folic acid metabolic process"/>
    <property type="evidence" value="ECO:0007669"/>
    <property type="project" value="TreeGrafter"/>
</dbReference>
<dbReference type="GO" id="GO:0006730">
    <property type="term" value="P:one-carbon metabolic process"/>
    <property type="evidence" value="ECO:0007669"/>
    <property type="project" value="UniProtKB-KW"/>
</dbReference>
<dbReference type="GO" id="GO:0046654">
    <property type="term" value="P:tetrahydrofolate biosynthetic process"/>
    <property type="evidence" value="ECO:0007669"/>
    <property type="project" value="UniProtKB-UniPathway"/>
</dbReference>
<dbReference type="CDD" id="cd00209">
    <property type="entry name" value="DHFR"/>
    <property type="match status" value="1"/>
</dbReference>
<dbReference type="FunFam" id="3.40.430.10:FF:000001">
    <property type="entry name" value="Dihydrofolate reductase"/>
    <property type="match status" value="1"/>
</dbReference>
<dbReference type="Gene3D" id="3.40.430.10">
    <property type="entry name" value="Dihydrofolate Reductase, subunit A"/>
    <property type="match status" value="1"/>
</dbReference>
<dbReference type="InterPro" id="IPR012259">
    <property type="entry name" value="DHFR"/>
</dbReference>
<dbReference type="InterPro" id="IPR024072">
    <property type="entry name" value="DHFR-like_dom_sf"/>
</dbReference>
<dbReference type="InterPro" id="IPR017925">
    <property type="entry name" value="DHFR_CS"/>
</dbReference>
<dbReference type="InterPro" id="IPR001796">
    <property type="entry name" value="DHFR_dom"/>
</dbReference>
<dbReference type="NCBIfam" id="NF008037">
    <property type="entry name" value="PRK10769.1"/>
    <property type="match status" value="1"/>
</dbReference>
<dbReference type="PANTHER" id="PTHR48069">
    <property type="entry name" value="DIHYDROFOLATE REDUCTASE"/>
    <property type="match status" value="1"/>
</dbReference>
<dbReference type="PANTHER" id="PTHR48069:SF3">
    <property type="entry name" value="DIHYDROFOLATE REDUCTASE"/>
    <property type="match status" value="1"/>
</dbReference>
<dbReference type="Pfam" id="PF00186">
    <property type="entry name" value="DHFR_1"/>
    <property type="match status" value="1"/>
</dbReference>
<dbReference type="PIRSF" id="PIRSF000194">
    <property type="entry name" value="DHFR"/>
    <property type="match status" value="1"/>
</dbReference>
<dbReference type="PRINTS" id="PR00070">
    <property type="entry name" value="DHFR"/>
</dbReference>
<dbReference type="SUPFAM" id="SSF53597">
    <property type="entry name" value="Dihydrofolate reductase-like"/>
    <property type="match status" value="1"/>
</dbReference>
<dbReference type="PROSITE" id="PS00075">
    <property type="entry name" value="DHFR_1"/>
    <property type="match status" value="1"/>
</dbReference>
<dbReference type="PROSITE" id="PS51330">
    <property type="entry name" value="DHFR_2"/>
    <property type="match status" value="1"/>
</dbReference>